<dbReference type="EC" id="2.7.1.24" evidence="1"/>
<dbReference type="EMBL" id="CP000089">
    <property type="protein sequence ID" value="AAZ48438.1"/>
    <property type="molecule type" value="Genomic_DNA"/>
</dbReference>
<dbReference type="SMR" id="Q479P3"/>
<dbReference type="STRING" id="159087.Daro_3709"/>
<dbReference type="KEGG" id="dar:Daro_3709"/>
<dbReference type="eggNOG" id="COG0237">
    <property type="taxonomic scope" value="Bacteria"/>
</dbReference>
<dbReference type="HOGENOM" id="CLU_057180_1_2_4"/>
<dbReference type="OrthoDB" id="9812943at2"/>
<dbReference type="UniPathway" id="UPA00241">
    <property type="reaction ID" value="UER00356"/>
</dbReference>
<dbReference type="GO" id="GO:0005737">
    <property type="term" value="C:cytoplasm"/>
    <property type="evidence" value="ECO:0007669"/>
    <property type="project" value="UniProtKB-SubCell"/>
</dbReference>
<dbReference type="GO" id="GO:0005524">
    <property type="term" value="F:ATP binding"/>
    <property type="evidence" value="ECO:0007669"/>
    <property type="project" value="UniProtKB-UniRule"/>
</dbReference>
<dbReference type="GO" id="GO:0004140">
    <property type="term" value="F:dephospho-CoA kinase activity"/>
    <property type="evidence" value="ECO:0007669"/>
    <property type="project" value="UniProtKB-UniRule"/>
</dbReference>
<dbReference type="GO" id="GO:0015937">
    <property type="term" value="P:coenzyme A biosynthetic process"/>
    <property type="evidence" value="ECO:0007669"/>
    <property type="project" value="UniProtKB-UniRule"/>
</dbReference>
<dbReference type="CDD" id="cd02022">
    <property type="entry name" value="DPCK"/>
    <property type="match status" value="1"/>
</dbReference>
<dbReference type="Gene3D" id="3.40.50.300">
    <property type="entry name" value="P-loop containing nucleotide triphosphate hydrolases"/>
    <property type="match status" value="1"/>
</dbReference>
<dbReference type="HAMAP" id="MF_00376">
    <property type="entry name" value="Dephospho_CoA_kinase"/>
    <property type="match status" value="1"/>
</dbReference>
<dbReference type="InterPro" id="IPR001977">
    <property type="entry name" value="Depp_CoAkinase"/>
</dbReference>
<dbReference type="InterPro" id="IPR027417">
    <property type="entry name" value="P-loop_NTPase"/>
</dbReference>
<dbReference type="NCBIfam" id="TIGR00152">
    <property type="entry name" value="dephospho-CoA kinase"/>
    <property type="match status" value="1"/>
</dbReference>
<dbReference type="PANTHER" id="PTHR10695:SF46">
    <property type="entry name" value="BIFUNCTIONAL COENZYME A SYNTHASE-RELATED"/>
    <property type="match status" value="1"/>
</dbReference>
<dbReference type="PANTHER" id="PTHR10695">
    <property type="entry name" value="DEPHOSPHO-COA KINASE-RELATED"/>
    <property type="match status" value="1"/>
</dbReference>
<dbReference type="Pfam" id="PF01121">
    <property type="entry name" value="CoaE"/>
    <property type="match status" value="1"/>
</dbReference>
<dbReference type="SUPFAM" id="SSF52540">
    <property type="entry name" value="P-loop containing nucleoside triphosphate hydrolases"/>
    <property type="match status" value="1"/>
</dbReference>
<dbReference type="PROSITE" id="PS51219">
    <property type="entry name" value="DPCK"/>
    <property type="match status" value="1"/>
</dbReference>
<name>COAE_DECAR</name>
<organism>
    <name type="scientific">Dechloromonas aromatica (strain RCB)</name>
    <dbReference type="NCBI Taxonomy" id="159087"/>
    <lineage>
        <taxon>Bacteria</taxon>
        <taxon>Pseudomonadati</taxon>
        <taxon>Pseudomonadota</taxon>
        <taxon>Betaproteobacteria</taxon>
        <taxon>Rhodocyclales</taxon>
        <taxon>Azonexaceae</taxon>
        <taxon>Dechloromonas</taxon>
    </lineage>
</organism>
<keyword id="KW-0067">ATP-binding</keyword>
<keyword id="KW-0173">Coenzyme A biosynthesis</keyword>
<keyword id="KW-0963">Cytoplasm</keyword>
<keyword id="KW-0418">Kinase</keyword>
<keyword id="KW-0547">Nucleotide-binding</keyword>
<keyword id="KW-0808">Transferase</keyword>
<protein>
    <recommendedName>
        <fullName evidence="1">Dephospho-CoA kinase</fullName>
        <ecNumber evidence="1">2.7.1.24</ecNumber>
    </recommendedName>
    <alternativeName>
        <fullName evidence="1">Dephosphocoenzyme A kinase</fullName>
    </alternativeName>
</protein>
<comment type="function">
    <text evidence="1">Catalyzes the phosphorylation of the 3'-hydroxyl group of dephosphocoenzyme A to form coenzyme A.</text>
</comment>
<comment type="catalytic activity">
    <reaction evidence="1">
        <text>3'-dephospho-CoA + ATP = ADP + CoA + H(+)</text>
        <dbReference type="Rhea" id="RHEA:18245"/>
        <dbReference type="ChEBI" id="CHEBI:15378"/>
        <dbReference type="ChEBI" id="CHEBI:30616"/>
        <dbReference type="ChEBI" id="CHEBI:57287"/>
        <dbReference type="ChEBI" id="CHEBI:57328"/>
        <dbReference type="ChEBI" id="CHEBI:456216"/>
        <dbReference type="EC" id="2.7.1.24"/>
    </reaction>
</comment>
<comment type="pathway">
    <text evidence="1">Cofactor biosynthesis; coenzyme A biosynthesis; CoA from (R)-pantothenate: step 5/5.</text>
</comment>
<comment type="subcellular location">
    <subcellularLocation>
        <location evidence="1">Cytoplasm</location>
    </subcellularLocation>
</comment>
<comment type="similarity">
    <text evidence="1">Belongs to the CoaE family.</text>
</comment>
<reference key="1">
    <citation type="journal article" date="2009" name="BMC Genomics">
        <title>Metabolic analysis of the soil microbe Dechloromonas aromatica str. RCB: indications of a surprisingly complex life-style and cryptic anaerobic pathways for aromatic degradation.</title>
        <authorList>
            <person name="Salinero K.K."/>
            <person name="Keller K."/>
            <person name="Feil W.S."/>
            <person name="Feil H."/>
            <person name="Trong S."/>
            <person name="Di Bartolo G."/>
            <person name="Lapidus A."/>
        </authorList>
    </citation>
    <scope>NUCLEOTIDE SEQUENCE [LARGE SCALE GENOMIC DNA]</scope>
    <source>
        <strain>RCB</strain>
    </source>
</reference>
<gene>
    <name evidence="1" type="primary">coaE</name>
    <name type="ordered locus">Daro_3709</name>
</gene>
<proteinExistence type="inferred from homology"/>
<sequence length="207" mass="21868">MSCFVVGLTGGIGSGKSTVADLFVEQGAGLVDTDAIAHELTAAGGAAMPALIAEFGALVATADGAMDRAVMRRQVFADPSARVRLEGILHPLIRQLSAERCRAAASPYVILAVPLLVESGTYRERCDRIVVVDCPESLQIERVMARNGMSADEVKAIMAAQATRQQRLAAANDVVVNDADQAKLYAQVSALHLQYLKLSAEKVKASC</sequence>
<evidence type="ECO:0000255" key="1">
    <source>
        <dbReference type="HAMAP-Rule" id="MF_00376"/>
    </source>
</evidence>
<accession>Q479P3</accession>
<feature type="chain" id="PRO_0000243279" description="Dephospho-CoA kinase">
    <location>
        <begin position="1"/>
        <end position="207"/>
    </location>
</feature>
<feature type="domain" description="DPCK" evidence="1">
    <location>
        <begin position="5"/>
        <end position="202"/>
    </location>
</feature>
<feature type="binding site" evidence="1">
    <location>
        <begin position="13"/>
        <end position="18"/>
    </location>
    <ligand>
        <name>ATP</name>
        <dbReference type="ChEBI" id="CHEBI:30616"/>
    </ligand>
</feature>